<reference key="1">
    <citation type="journal article" date="2007" name="PLoS Genet.">
        <title>Patterns and implications of gene gain and loss in the evolution of Prochlorococcus.</title>
        <authorList>
            <person name="Kettler G.C."/>
            <person name="Martiny A.C."/>
            <person name="Huang K."/>
            <person name="Zucker J."/>
            <person name="Coleman M.L."/>
            <person name="Rodrigue S."/>
            <person name="Chen F."/>
            <person name="Lapidus A."/>
            <person name="Ferriera S."/>
            <person name="Johnson J."/>
            <person name="Steglich C."/>
            <person name="Church G.M."/>
            <person name="Richardson P."/>
            <person name="Chisholm S.W."/>
        </authorList>
    </citation>
    <scope>NUCLEOTIDE SEQUENCE [LARGE SCALE GENOMIC DNA]</scope>
    <source>
        <strain>MIT 9215</strain>
    </source>
</reference>
<evidence type="ECO:0000255" key="1">
    <source>
        <dbReference type="HAMAP-Rule" id="MF_00531"/>
    </source>
</evidence>
<evidence type="ECO:0000305" key="2"/>
<keyword id="KW-0687">Ribonucleoprotein</keyword>
<keyword id="KW-0689">Ribosomal protein</keyword>
<keyword id="KW-0694">RNA-binding</keyword>
<keyword id="KW-0699">rRNA-binding</keyword>
<sequence length="92" mass="10281">MGRSLKKGPFIADSLLKKVEKQNTDNDKSVIKTWSRSSTILPVMIGHTIAVHNGKTHIPVFITEQMIGHKLGEFAPTRTYRGHIRDKKGAKS</sequence>
<accession>A8G758</accession>
<gene>
    <name evidence="1" type="primary">rpsS</name>
    <name evidence="1" type="synonym">rps19</name>
    <name type="ordered locus">P9215_18261</name>
</gene>
<comment type="function">
    <text evidence="1">Protein S19 forms a complex with S13 that binds strongly to the 16S ribosomal RNA.</text>
</comment>
<comment type="similarity">
    <text evidence="1">Belongs to the universal ribosomal protein uS19 family.</text>
</comment>
<proteinExistence type="inferred from homology"/>
<organism>
    <name type="scientific">Prochlorococcus marinus (strain MIT 9215)</name>
    <dbReference type="NCBI Taxonomy" id="93060"/>
    <lineage>
        <taxon>Bacteria</taxon>
        <taxon>Bacillati</taxon>
        <taxon>Cyanobacteriota</taxon>
        <taxon>Cyanophyceae</taxon>
        <taxon>Synechococcales</taxon>
        <taxon>Prochlorococcaceae</taxon>
        <taxon>Prochlorococcus</taxon>
    </lineage>
</organism>
<name>RS19_PROM2</name>
<dbReference type="EMBL" id="CP000825">
    <property type="protein sequence ID" value="ABV51439.1"/>
    <property type="molecule type" value="Genomic_DNA"/>
</dbReference>
<dbReference type="RefSeq" id="WP_012008445.1">
    <property type="nucleotide sequence ID" value="NC_009840.1"/>
</dbReference>
<dbReference type="SMR" id="A8G758"/>
<dbReference type="STRING" id="93060.P9215_18261"/>
<dbReference type="KEGG" id="pmh:P9215_18261"/>
<dbReference type="eggNOG" id="COG0185">
    <property type="taxonomic scope" value="Bacteria"/>
</dbReference>
<dbReference type="HOGENOM" id="CLU_144911_0_1_3"/>
<dbReference type="OrthoDB" id="9797833at2"/>
<dbReference type="Proteomes" id="UP000002014">
    <property type="component" value="Chromosome"/>
</dbReference>
<dbReference type="GO" id="GO:0005737">
    <property type="term" value="C:cytoplasm"/>
    <property type="evidence" value="ECO:0007669"/>
    <property type="project" value="UniProtKB-ARBA"/>
</dbReference>
<dbReference type="GO" id="GO:0015935">
    <property type="term" value="C:small ribosomal subunit"/>
    <property type="evidence" value="ECO:0007669"/>
    <property type="project" value="InterPro"/>
</dbReference>
<dbReference type="GO" id="GO:0019843">
    <property type="term" value="F:rRNA binding"/>
    <property type="evidence" value="ECO:0007669"/>
    <property type="project" value="UniProtKB-UniRule"/>
</dbReference>
<dbReference type="GO" id="GO:0003735">
    <property type="term" value="F:structural constituent of ribosome"/>
    <property type="evidence" value="ECO:0007669"/>
    <property type="project" value="InterPro"/>
</dbReference>
<dbReference type="GO" id="GO:0000028">
    <property type="term" value="P:ribosomal small subunit assembly"/>
    <property type="evidence" value="ECO:0007669"/>
    <property type="project" value="TreeGrafter"/>
</dbReference>
<dbReference type="GO" id="GO:0006412">
    <property type="term" value="P:translation"/>
    <property type="evidence" value="ECO:0007669"/>
    <property type="project" value="UniProtKB-UniRule"/>
</dbReference>
<dbReference type="FunFam" id="3.30.860.10:FF:000001">
    <property type="entry name" value="30S ribosomal protein S19"/>
    <property type="match status" value="1"/>
</dbReference>
<dbReference type="Gene3D" id="3.30.860.10">
    <property type="entry name" value="30s Ribosomal Protein S19, Chain A"/>
    <property type="match status" value="1"/>
</dbReference>
<dbReference type="HAMAP" id="MF_00531">
    <property type="entry name" value="Ribosomal_uS19"/>
    <property type="match status" value="1"/>
</dbReference>
<dbReference type="InterPro" id="IPR002222">
    <property type="entry name" value="Ribosomal_uS19"/>
</dbReference>
<dbReference type="InterPro" id="IPR005732">
    <property type="entry name" value="Ribosomal_uS19_bac-type"/>
</dbReference>
<dbReference type="InterPro" id="IPR020934">
    <property type="entry name" value="Ribosomal_uS19_CS"/>
</dbReference>
<dbReference type="InterPro" id="IPR023575">
    <property type="entry name" value="Ribosomal_uS19_SF"/>
</dbReference>
<dbReference type="NCBIfam" id="TIGR01050">
    <property type="entry name" value="rpsS_bact"/>
    <property type="match status" value="1"/>
</dbReference>
<dbReference type="PANTHER" id="PTHR11880">
    <property type="entry name" value="RIBOSOMAL PROTEIN S19P FAMILY MEMBER"/>
    <property type="match status" value="1"/>
</dbReference>
<dbReference type="PANTHER" id="PTHR11880:SF8">
    <property type="entry name" value="SMALL RIBOSOMAL SUBUNIT PROTEIN US19M"/>
    <property type="match status" value="1"/>
</dbReference>
<dbReference type="Pfam" id="PF00203">
    <property type="entry name" value="Ribosomal_S19"/>
    <property type="match status" value="1"/>
</dbReference>
<dbReference type="PIRSF" id="PIRSF002144">
    <property type="entry name" value="Ribosomal_S19"/>
    <property type="match status" value="1"/>
</dbReference>
<dbReference type="PRINTS" id="PR00975">
    <property type="entry name" value="RIBOSOMALS19"/>
</dbReference>
<dbReference type="SUPFAM" id="SSF54570">
    <property type="entry name" value="Ribosomal protein S19"/>
    <property type="match status" value="1"/>
</dbReference>
<dbReference type="PROSITE" id="PS00323">
    <property type="entry name" value="RIBOSOMAL_S19"/>
    <property type="match status" value="1"/>
</dbReference>
<protein>
    <recommendedName>
        <fullName evidence="1">Small ribosomal subunit protein uS19</fullName>
    </recommendedName>
    <alternativeName>
        <fullName evidence="2">30S ribosomal protein S19</fullName>
    </alternativeName>
</protein>
<feature type="chain" id="PRO_1000060995" description="Small ribosomal subunit protein uS19">
    <location>
        <begin position="1"/>
        <end position="92"/>
    </location>
</feature>